<dbReference type="EMBL" id="AM286690">
    <property type="protein sequence ID" value="CAL15822.1"/>
    <property type="molecule type" value="Genomic_DNA"/>
</dbReference>
<dbReference type="RefSeq" id="WP_011587669.1">
    <property type="nucleotide sequence ID" value="NC_008260.1"/>
</dbReference>
<dbReference type="SMR" id="Q0VSM6"/>
<dbReference type="STRING" id="393595.ABO_0374"/>
<dbReference type="KEGG" id="abo:ABO_0374"/>
<dbReference type="eggNOG" id="COG0080">
    <property type="taxonomic scope" value="Bacteria"/>
</dbReference>
<dbReference type="HOGENOM" id="CLU_074237_2_0_6"/>
<dbReference type="OrthoDB" id="9802408at2"/>
<dbReference type="Proteomes" id="UP000008871">
    <property type="component" value="Chromosome"/>
</dbReference>
<dbReference type="GO" id="GO:0022625">
    <property type="term" value="C:cytosolic large ribosomal subunit"/>
    <property type="evidence" value="ECO:0007669"/>
    <property type="project" value="TreeGrafter"/>
</dbReference>
<dbReference type="GO" id="GO:0070180">
    <property type="term" value="F:large ribosomal subunit rRNA binding"/>
    <property type="evidence" value="ECO:0007669"/>
    <property type="project" value="UniProtKB-UniRule"/>
</dbReference>
<dbReference type="GO" id="GO:0003735">
    <property type="term" value="F:structural constituent of ribosome"/>
    <property type="evidence" value="ECO:0007669"/>
    <property type="project" value="InterPro"/>
</dbReference>
<dbReference type="GO" id="GO:0006412">
    <property type="term" value="P:translation"/>
    <property type="evidence" value="ECO:0007669"/>
    <property type="project" value="UniProtKB-UniRule"/>
</dbReference>
<dbReference type="CDD" id="cd00349">
    <property type="entry name" value="Ribosomal_L11"/>
    <property type="match status" value="1"/>
</dbReference>
<dbReference type="FunFam" id="1.10.10.250:FF:000001">
    <property type="entry name" value="50S ribosomal protein L11"/>
    <property type="match status" value="1"/>
</dbReference>
<dbReference type="FunFam" id="3.30.1550.10:FF:000001">
    <property type="entry name" value="50S ribosomal protein L11"/>
    <property type="match status" value="1"/>
</dbReference>
<dbReference type="Gene3D" id="1.10.10.250">
    <property type="entry name" value="Ribosomal protein L11, C-terminal domain"/>
    <property type="match status" value="1"/>
</dbReference>
<dbReference type="Gene3D" id="3.30.1550.10">
    <property type="entry name" value="Ribosomal protein L11/L12, N-terminal domain"/>
    <property type="match status" value="1"/>
</dbReference>
<dbReference type="HAMAP" id="MF_00736">
    <property type="entry name" value="Ribosomal_uL11"/>
    <property type="match status" value="1"/>
</dbReference>
<dbReference type="InterPro" id="IPR000911">
    <property type="entry name" value="Ribosomal_uL11"/>
</dbReference>
<dbReference type="InterPro" id="IPR006519">
    <property type="entry name" value="Ribosomal_uL11_bac-typ"/>
</dbReference>
<dbReference type="InterPro" id="IPR020783">
    <property type="entry name" value="Ribosomal_uL11_C"/>
</dbReference>
<dbReference type="InterPro" id="IPR036769">
    <property type="entry name" value="Ribosomal_uL11_C_sf"/>
</dbReference>
<dbReference type="InterPro" id="IPR020785">
    <property type="entry name" value="Ribosomal_uL11_CS"/>
</dbReference>
<dbReference type="InterPro" id="IPR020784">
    <property type="entry name" value="Ribosomal_uL11_N"/>
</dbReference>
<dbReference type="InterPro" id="IPR036796">
    <property type="entry name" value="Ribosomal_uL11_N_sf"/>
</dbReference>
<dbReference type="NCBIfam" id="TIGR01632">
    <property type="entry name" value="L11_bact"/>
    <property type="match status" value="1"/>
</dbReference>
<dbReference type="PANTHER" id="PTHR11661">
    <property type="entry name" value="60S RIBOSOMAL PROTEIN L12"/>
    <property type="match status" value="1"/>
</dbReference>
<dbReference type="PANTHER" id="PTHR11661:SF1">
    <property type="entry name" value="LARGE RIBOSOMAL SUBUNIT PROTEIN UL11M"/>
    <property type="match status" value="1"/>
</dbReference>
<dbReference type="Pfam" id="PF00298">
    <property type="entry name" value="Ribosomal_L11"/>
    <property type="match status" value="1"/>
</dbReference>
<dbReference type="Pfam" id="PF03946">
    <property type="entry name" value="Ribosomal_L11_N"/>
    <property type="match status" value="1"/>
</dbReference>
<dbReference type="SMART" id="SM00649">
    <property type="entry name" value="RL11"/>
    <property type="match status" value="1"/>
</dbReference>
<dbReference type="SUPFAM" id="SSF54747">
    <property type="entry name" value="Ribosomal L11/L12e N-terminal domain"/>
    <property type="match status" value="1"/>
</dbReference>
<dbReference type="SUPFAM" id="SSF46906">
    <property type="entry name" value="Ribosomal protein L11, C-terminal domain"/>
    <property type="match status" value="1"/>
</dbReference>
<dbReference type="PROSITE" id="PS00359">
    <property type="entry name" value="RIBOSOMAL_L11"/>
    <property type="match status" value="1"/>
</dbReference>
<sequence length="142" mass="14841">MAKKVQAYIKLQVAAGQANPSPPVGPALGQHGVNIMEFCKAFNAQTQQLDAGAPVPVVITVYNDRSFTFTMKTPPAAYLLKKAAGIKSGSGEPNTKKVGKVTRAQLEEIAKAKEPDLTAADMDAAVRTIAGSARSMGLDVEG</sequence>
<comment type="function">
    <text evidence="1">Forms part of the ribosomal stalk which helps the ribosome interact with GTP-bound translation factors.</text>
</comment>
<comment type="subunit">
    <text evidence="1">Part of the ribosomal stalk of the 50S ribosomal subunit. Interacts with L10 and the large rRNA to form the base of the stalk. L10 forms an elongated spine to which L12 dimers bind in a sequential fashion forming a multimeric L10(L12)X complex.</text>
</comment>
<comment type="PTM">
    <text evidence="1">One or more lysine residues are methylated.</text>
</comment>
<comment type="similarity">
    <text evidence="1">Belongs to the universal ribosomal protein uL11 family.</text>
</comment>
<evidence type="ECO:0000255" key="1">
    <source>
        <dbReference type="HAMAP-Rule" id="MF_00736"/>
    </source>
</evidence>
<evidence type="ECO:0000305" key="2"/>
<keyword id="KW-0488">Methylation</keyword>
<keyword id="KW-1185">Reference proteome</keyword>
<keyword id="KW-0687">Ribonucleoprotein</keyword>
<keyword id="KW-0689">Ribosomal protein</keyword>
<keyword id="KW-0694">RNA-binding</keyword>
<keyword id="KW-0699">rRNA-binding</keyword>
<protein>
    <recommendedName>
        <fullName evidence="1">Large ribosomal subunit protein uL11</fullName>
    </recommendedName>
    <alternativeName>
        <fullName evidence="2">50S ribosomal protein L11</fullName>
    </alternativeName>
</protein>
<name>RL11_ALCBS</name>
<accession>Q0VSM6</accession>
<gene>
    <name evidence="1" type="primary">rplK</name>
    <name type="ordered locus">ABO_0374</name>
</gene>
<proteinExistence type="inferred from homology"/>
<reference key="1">
    <citation type="journal article" date="2006" name="Nat. Biotechnol.">
        <title>Genome sequence of the ubiquitous hydrocarbon-degrading marine bacterium Alcanivorax borkumensis.</title>
        <authorList>
            <person name="Schneiker S."/>
            <person name="Martins dos Santos V.A.P."/>
            <person name="Bartels D."/>
            <person name="Bekel T."/>
            <person name="Brecht M."/>
            <person name="Buhrmester J."/>
            <person name="Chernikova T.N."/>
            <person name="Denaro R."/>
            <person name="Ferrer M."/>
            <person name="Gertler C."/>
            <person name="Goesmann A."/>
            <person name="Golyshina O.V."/>
            <person name="Kaminski F."/>
            <person name="Khachane A.N."/>
            <person name="Lang S."/>
            <person name="Linke B."/>
            <person name="McHardy A.C."/>
            <person name="Meyer F."/>
            <person name="Nechitaylo T."/>
            <person name="Puehler A."/>
            <person name="Regenhardt D."/>
            <person name="Rupp O."/>
            <person name="Sabirova J.S."/>
            <person name="Selbitschka W."/>
            <person name="Yakimov M.M."/>
            <person name="Timmis K.N."/>
            <person name="Vorhoelter F.-J."/>
            <person name="Weidner S."/>
            <person name="Kaiser O."/>
            <person name="Golyshin P.N."/>
        </authorList>
    </citation>
    <scope>NUCLEOTIDE SEQUENCE [LARGE SCALE GENOMIC DNA]</scope>
    <source>
        <strain>ATCC 700651 / DSM 11573 / NCIMB 13689 / SK2</strain>
    </source>
</reference>
<feature type="chain" id="PRO_1000046134" description="Large ribosomal subunit protein uL11">
    <location>
        <begin position="1"/>
        <end position="142"/>
    </location>
</feature>
<organism>
    <name type="scientific">Alcanivorax borkumensis (strain ATCC 700651 / DSM 11573 / NCIMB 13689 / SK2)</name>
    <dbReference type="NCBI Taxonomy" id="393595"/>
    <lineage>
        <taxon>Bacteria</taxon>
        <taxon>Pseudomonadati</taxon>
        <taxon>Pseudomonadota</taxon>
        <taxon>Gammaproteobacteria</taxon>
        <taxon>Oceanospirillales</taxon>
        <taxon>Alcanivoracaceae</taxon>
        <taxon>Alcanivorax</taxon>
    </lineage>
</organism>